<protein>
    <recommendedName>
        <fullName evidence="1">3-isopropylmalate dehydratase small subunit</fullName>
        <ecNumber evidence="1">4.2.1.33</ecNumber>
    </recommendedName>
    <alternativeName>
        <fullName evidence="1">Alpha-IPM isomerase</fullName>
        <shortName evidence="1">IPMI</shortName>
    </alternativeName>
    <alternativeName>
        <fullName evidence="1">Isopropylmalate isomerase</fullName>
    </alternativeName>
</protein>
<organism>
    <name type="scientific">Yersinia pestis bv. Antiqua (strain Nepal516)</name>
    <dbReference type="NCBI Taxonomy" id="377628"/>
    <lineage>
        <taxon>Bacteria</taxon>
        <taxon>Pseudomonadati</taxon>
        <taxon>Pseudomonadota</taxon>
        <taxon>Gammaproteobacteria</taxon>
        <taxon>Enterobacterales</taxon>
        <taxon>Yersiniaceae</taxon>
        <taxon>Yersinia</taxon>
    </lineage>
</organism>
<comment type="function">
    <text evidence="1">Catalyzes the isomerization between 2-isopropylmalate and 3-isopropylmalate, via the formation of 2-isopropylmaleate.</text>
</comment>
<comment type="catalytic activity">
    <reaction evidence="1">
        <text>(2R,3S)-3-isopropylmalate = (2S)-2-isopropylmalate</text>
        <dbReference type="Rhea" id="RHEA:32287"/>
        <dbReference type="ChEBI" id="CHEBI:1178"/>
        <dbReference type="ChEBI" id="CHEBI:35121"/>
        <dbReference type="EC" id="4.2.1.33"/>
    </reaction>
</comment>
<comment type="pathway">
    <text evidence="1">Amino-acid biosynthesis; L-leucine biosynthesis; L-leucine from 3-methyl-2-oxobutanoate: step 2/4.</text>
</comment>
<comment type="subunit">
    <text evidence="1">Heterodimer of LeuC and LeuD.</text>
</comment>
<comment type="similarity">
    <text evidence="1">Belongs to the LeuD family. LeuD type 1 subfamily.</text>
</comment>
<accession>Q1CMP8</accession>
<accession>C4GNV5</accession>
<proteinExistence type="inferred from homology"/>
<name>LEUD_YERPN</name>
<gene>
    <name evidence="1" type="primary">leuD</name>
    <name type="ordered locus">YPN_0400</name>
    <name type="ORF">YP516_0411</name>
</gene>
<sequence length="200" mass="22471">MAKFIQHIGLVAPLDAANVDTDAIIPKQFLQKVTRTGFGQHLFNDWRFLDDAGKVPNPDFVLNLPRYQGATILLARENFGCGSSREHAPWALTDFGFKVVIAPSFADIFYGNAFNNQLLPVTLSEADIDTLFQLVKENEGIEFVVDLEQQTVNAGGKSYAFEIDPFRRHCMINGLDSIGLTLQHEHNISAYEKQQPEFLR</sequence>
<evidence type="ECO:0000255" key="1">
    <source>
        <dbReference type="HAMAP-Rule" id="MF_01031"/>
    </source>
</evidence>
<reference key="1">
    <citation type="journal article" date="2006" name="J. Bacteriol.">
        <title>Complete genome sequence of Yersinia pestis strains Antiqua and Nepal516: evidence of gene reduction in an emerging pathogen.</title>
        <authorList>
            <person name="Chain P.S.G."/>
            <person name="Hu P."/>
            <person name="Malfatti S.A."/>
            <person name="Radnedge L."/>
            <person name="Larimer F."/>
            <person name="Vergez L.M."/>
            <person name="Worsham P."/>
            <person name="Chu M.C."/>
            <person name="Andersen G.L."/>
        </authorList>
    </citation>
    <scope>NUCLEOTIDE SEQUENCE [LARGE SCALE GENOMIC DNA]</scope>
    <source>
        <strain>Nepal516</strain>
    </source>
</reference>
<reference key="2">
    <citation type="submission" date="2009-04" db="EMBL/GenBank/DDBJ databases">
        <title>Yersinia pestis Nepal516A whole genome shotgun sequencing project.</title>
        <authorList>
            <person name="Plunkett G. III"/>
            <person name="Anderson B.D."/>
            <person name="Baumler D.J."/>
            <person name="Burland V."/>
            <person name="Cabot E.L."/>
            <person name="Glasner J.D."/>
            <person name="Mau B."/>
            <person name="Neeno-Eckwall E."/>
            <person name="Perna N.T."/>
            <person name="Munk A.C."/>
            <person name="Tapia R."/>
            <person name="Green L.D."/>
            <person name="Rogers Y.C."/>
            <person name="Detter J.C."/>
            <person name="Bruce D.C."/>
            <person name="Brettin T.S."/>
        </authorList>
    </citation>
    <scope>NUCLEOTIDE SEQUENCE [LARGE SCALE GENOMIC DNA]</scope>
    <source>
        <strain>Nepal516</strain>
    </source>
</reference>
<dbReference type="EC" id="4.2.1.33" evidence="1"/>
<dbReference type="EMBL" id="CP000305">
    <property type="protein sequence ID" value="ABG16732.1"/>
    <property type="molecule type" value="Genomic_DNA"/>
</dbReference>
<dbReference type="EMBL" id="ACNQ01000006">
    <property type="protein sequence ID" value="EEO78187.1"/>
    <property type="molecule type" value="Genomic_DNA"/>
</dbReference>
<dbReference type="RefSeq" id="WP_002210456.1">
    <property type="nucleotide sequence ID" value="NZ_ACNQ01000006.1"/>
</dbReference>
<dbReference type="SMR" id="Q1CMP8"/>
<dbReference type="GeneID" id="57974082"/>
<dbReference type="KEGG" id="ypn:YPN_0400"/>
<dbReference type="HOGENOM" id="CLU_081378_0_3_6"/>
<dbReference type="UniPathway" id="UPA00048">
    <property type="reaction ID" value="UER00071"/>
</dbReference>
<dbReference type="Proteomes" id="UP000008936">
    <property type="component" value="Chromosome"/>
</dbReference>
<dbReference type="GO" id="GO:0009316">
    <property type="term" value="C:3-isopropylmalate dehydratase complex"/>
    <property type="evidence" value="ECO:0007669"/>
    <property type="project" value="InterPro"/>
</dbReference>
<dbReference type="GO" id="GO:0003861">
    <property type="term" value="F:3-isopropylmalate dehydratase activity"/>
    <property type="evidence" value="ECO:0007669"/>
    <property type="project" value="UniProtKB-UniRule"/>
</dbReference>
<dbReference type="GO" id="GO:0009098">
    <property type="term" value="P:L-leucine biosynthetic process"/>
    <property type="evidence" value="ECO:0007669"/>
    <property type="project" value="UniProtKB-UniRule"/>
</dbReference>
<dbReference type="CDD" id="cd01577">
    <property type="entry name" value="IPMI_Swivel"/>
    <property type="match status" value="1"/>
</dbReference>
<dbReference type="FunFam" id="3.20.19.10:FF:000003">
    <property type="entry name" value="3-isopropylmalate dehydratase small subunit"/>
    <property type="match status" value="1"/>
</dbReference>
<dbReference type="Gene3D" id="3.20.19.10">
    <property type="entry name" value="Aconitase, domain 4"/>
    <property type="match status" value="1"/>
</dbReference>
<dbReference type="HAMAP" id="MF_01031">
    <property type="entry name" value="LeuD_type1"/>
    <property type="match status" value="1"/>
</dbReference>
<dbReference type="InterPro" id="IPR004431">
    <property type="entry name" value="3-IsopropMal_deHydase_ssu"/>
</dbReference>
<dbReference type="InterPro" id="IPR015928">
    <property type="entry name" value="Aconitase/3IPM_dehydase_swvl"/>
</dbReference>
<dbReference type="InterPro" id="IPR000573">
    <property type="entry name" value="AconitaseA/IPMdHydase_ssu_swvl"/>
</dbReference>
<dbReference type="InterPro" id="IPR033940">
    <property type="entry name" value="IPMI_Swivel"/>
</dbReference>
<dbReference type="InterPro" id="IPR050075">
    <property type="entry name" value="LeuD"/>
</dbReference>
<dbReference type="NCBIfam" id="TIGR00171">
    <property type="entry name" value="leuD"/>
    <property type="match status" value="1"/>
</dbReference>
<dbReference type="NCBIfam" id="NF002458">
    <property type="entry name" value="PRK01641.1"/>
    <property type="match status" value="1"/>
</dbReference>
<dbReference type="PANTHER" id="PTHR43345:SF5">
    <property type="entry name" value="3-ISOPROPYLMALATE DEHYDRATASE SMALL SUBUNIT"/>
    <property type="match status" value="1"/>
</dbReference>
<dbReference type="PANTHER" id="PTHR43345">
    <property type="entry name" value="3-ISOPROPYLMALATE DEHYDRATASE SMALL SUBUNIT 2-RELATED-RELATED"/>
    <property type="match status" value="1"/>
</dbReference>
<dbReference type="Pfam" id="PF00694">
    <property type="entry name" value="Aconitase_C"/>
    <property type="match status" value="1"/>
</dbReference>
<dbReference type="SUPFAM" id="SSF52016">
    <property type="entry name" value="LeuD/IlvD-like"/>
    <property type="match status" value="1"/>
</dbReference>
<feature type="chain" id="PRO_1000063860" description="3-isopropylmalate dehydratase small subunit">
    <location>
        <begin position="1"/>
        <end position="200"/>
    </location>
</feature>
<keyword id="KW-0028">Amino-acid biosynthesis</keyword>
<keyword id="KW-0100">Branched-chain amino acid biosynthesis</keyword>
<keyword id="KW-0432">Leucine biosynthesis</keyword>
<keyword id="KW-0456">Lyase</keyword>